<gene>
    <name type="primary">Helz</name>
    <name type="synonym">Kiaa0054</name>
</gene>
<protein>
    <recommendedName>
        <fullName>Probable helicase with zinc finger domain</fullName>
        <ecNumber>3.6.4.-</ecNumber>
    </recommendedName>
</protein>
<proteinExistence type="evidence at protein level"/>
<organism>
    <name type="scientific">Mus musculus</name>
    <name type="common">Mouse</name>
    <dbReference type="NCBI Taxonomy" id="10090"/>
    <lineage>
        <taxon>Eukaryota</taxon>
        <taxon>Metazoa</taxon>
        <taxon>Chordata</taxon>
        <taxon>Craniata</taxon>
        <taxon>Vertebrata</taxon>
        <taxon>Euteleostomi</taxon>
        <taxon>Mammalia</taxon>
        <taxon>Eutheria</taxon>
        <taxon>Euarchontoglires</taxon>
        <taxon>Glires</taxon>
        <taxon>Rodentia</taxon>
        <taxon>Myomorpha</taxon>
        <taxon>Muroidea</taxon>
        <taxon>Muridae</taxon>
        <taxon>Murinae</taxon>
        <taxon>Mus</taxon>
        <taxon>Mus</taxon>
    </lineage>
</organism>
<reference key="1">
    <citation type="journal article" date="2002" name="DNA Res.">
        <title>Prediction of the coding sequences of mouse homologues of KIAA gene: I. The complete nucleotide sequences of 100 mouse KIAA-homologous cDNAs identified by screening of terminal sequences of cDNA clones randomly sampled from size-fractionated libraries.</title>
        <authorList>
            <person name="Okazaki N."/>
            <person name="Kikuno R."/>
            <person name="Ohara R."/>
            <person name="Inamoto S."/>
            <person name="Hara Y."/>
            <person name="Nagase T."/>
            <person name="Ohara O."/>
            <person name="Koga H."/>
        </authorList>
    </citation>
    <scope>NUCLEOTIDE SEQUENCE [LARGE SCALE MRNA] (ISOFORM 2)</scope>
</reference>
<reference key="2">
    <citation type="journal article" date="2009" name="PLoS Biol.">
        <title>Lineage-specific biology revealed by a finished genome assembly of the mouse.</title>
        <authorList>
            <person name="Church D.M."/>
            <person name="Goodstadt L."/>
            <person name="Hillier L.W."/>
            <person name="Zody M.C."/>
            <person name="Goldstein S."/>
            <person name="She X."/>
            <person name="Bult C.J."/>
            <person name="Agarwala R."/>
            <person name="Cherry J.L."/>
            <person name="DiCuccio M."/>
            <person name="Hlavina W."/>
            <person name="Kapustin Y."/>
            <person name="Meric P."/>
            <person name="Maglott D."/>
            <person name="Birtle Z."/>
            <person name="Marques A.C."/>
            <person name="Graves T."/>
            <person name="Zhou S."/>
            <person name="Teague B."/>
            <person name="Potamousis K."/>
            <person name="Churas C."/>
            <person name="Place M."/>
            <person name="Herschleb J."/>
            <person name="Runnheim R."/>
            <person name="Forrest D."/>
            <person name="Amos-Landgraf J."/>
            <person name="Schwartz D.C."/>
            <person name="Cheng Z."/>
            <person name="Lindblad-Toh K."/>
            <person name="Eichler E.E."/>
            <person name="Ponting C.P."/>
        </authorList>
    </citation>
    <scope>NUCLEOTIDE SEQUENCE [LARGE SCALE GENOMIC DNA]</scope>
    <source>
        <strain>C57BL/6J</strain>
    </source>
</reference>
<reference key="3">
    <citation type="journal article" date="2004" name="Genome Res.">
        <title>The status, quality, and expansion of the NIH full-length cDNA project: the Mammalian Gene Collection (MGC).</title>
        <authorList>
            <consortium name="The MGC Project Team"/>
        </authorList>
    </citation>
    <scope>NUCLEOTIDE SEQUENCE [LARGE SCALE MRNA] (ISOFORM 3)</scope>
    <source>
        <strain>C57BL/6J</strain>
        <strain>Czech II</strain>
        <tissue>Head</tissue>
        <tissue>Mammary tumor</tissue>
    </source>
</reference>
<reference key="4">
    <citation type="journal article" date="2005" name="Science">
        <title>The transcriptional landscape of the mammalian genome.</title>
        <authorList>
            <person name="Carninci P."/>
            <person name="Kasukawa T."/>
            <person name="Katayama S."/>
            <person name="Gough J."/>
            <person name="Frith M.C."/>
            <person name="Maeda N."/>
            <person name="Oyama R."/>
            <person name="Ravasi T."/>
            <person name="Lenhard B."/>
            <person name="Wells C."/>
            <person name="Kodzius R."/>
            <person name="Shimokawa K."/>
            <person name="Bajic V.B."/>
            <person name="Brenner S.E."/>
            <person name="Batalov S."/>
            <person name="Forrest A.R."/>
            <person name="Zavolan M."/>
            <person name="Davis M.J."/>
            <person name="Wilming L.G."/>
            <person name="Aidinis V."/>
            <person name="Allen J.E."/>
            <person name="Ambesi-Impiombato A."/>
            <person name="Apweiler R."/>
            <person name="Aturaliya R.N."/>
            <person name="Bailey T.L."/>
            <person name="Bansal M."/>
            <person name="Baxter L."/>
            <person name="Beisel K.W."/>
            <person name="Bersano T."/>
            <person name="Bono H."/>
            <person name="Chalk A.M."/>
            <person name="Chiu K.P."/>
            <person name="Choudhary V."/>
            <person name="Christoffels A."/>
            <person name="Clutterbuck D.R."/>
            <person name="Crowe M.L."/>
            <person name="Dalla E."/>
            <person name="Dalrymple B.P."/>
            <person name="de Bono B."/>
            <person name="Della Gatta G."/>
            <person name="di Bernardo D."/>
            <person name="Down T."/>
            <person name="Engstrom P."/>
            <person name="Fagiolini M."/>
            <person name="Faulkner G."/>
            <person name="Fletcher C.F."/>
            <person name="Fukushima T."/>
            <person name="Furuno M."/>
            <person name="Futaki S."/>
            <person name="Gariboldi M."/>
            <person name="Georgii-Hemming P."/>
            <person name="Gingeras T.R."/>
            <person name="Gojobori T."/>
            <person name="Green R.E."/>
            <person name="Gustincich S."/>
            <person name="Harbers M."/>
            <person name="Hayashi Y."/>
            <person name="Hensch T.K."/>
            <person name="Hirokawa N."/>
            <person name="Hill D."/>
            <person name="Huminiecki L."/>
            <person name="Iacono M."/>
            <person name="Ikeo K."/>
            <person name="Iwama A."/>
            <person name="Ishikawa T."/>
            <person name="Jakt M."/>
            <person name="Kanapin A."/>
            <person name="Katoh M."/>
            <person name="Kawasawa Y."/>
            <person name="Kelso J."/>
            <person name="Kitamura H."/>
            <person name="Kitano H."/>
            <person name="Kollias G."/>
            <person name="Krishnan S.P."/>
            <person name="Kruger A."/>
            <person name="Kummerfeld S.K."/>
            <person name="Kurochkin I.V."/>
            <person name="Lareau L.F."/>
            <person name="Lazarevic D."/>
            <person name="Lipovich L."/>
            <person name="Liu J."/>
            <person name="Liuni S."/>
            <person name="McWilliam S."/>
            <person name="Madan Babu M."/>
            <person name="Madera M."/>
            <person name="Marchionni L."/>
            <person name="Matsuda H."/>
            <person name="Matsuzawa S."/>
            <person name="Miki H."/>
            <person name="Mignone F."/>
            <person name="Miyake S."/>
            <person name="Morris K."/>
            <person name="Mottagui-Tabar S."/>
            <person name="Mulder N."/>
            <person name="Nakano N."/>
            <person name="Nakauchi H."/>
            <person name="Ng P."/>
            <person name="Nilsson R."/>
            <person name="Nishiguchi S."/>
            <person name="Nishikawa S."/>
            <person name="Nori F."/>
            <person name="Ohara O."/>
            <person name="Okazaki Y."/>
            <person name="Orlando V."/>
            <person name="Pang K.C."/>
            <person name="Pavan W.J."/>
            <person name="Pavesi G."/>
            <person name="Pesole G."/>
            <person name="Petrovsky N."/>
            <person name="Piazza S."/>
            <person name="Reed J."/>
            <person name="Reid J.F."/>
            <person name="Ring B.Z."/>
            <person name="Ringwald M."/>
            <person name="Rost B."/>
            <person name="Ruan Y."/>
            <person name="Salzberg S.L."/>
            <person name="Sandelin A."/>
            <person name="Schneider C."/>
            <person name="Schoenbach C."/>
            <person name="Sekiguchi K."/>
            <person name="Semple C.A."/>
            <person name="Seno S."/>
            <person name="Sessa L."/>
            <person name="Sheng Y."/>
            <person name="Shibata Y."/>
            <person name="Shimada H."/>
            <person name="Shimada K."/>
            <person name="Silva D."/>
            <person name="Sinclair B."/>
            <person name="Sperling S."/>
            <person name="Stupka E."/>
            <person name="Sugiura K."/>
            <person name="Sultana R."/>
            <person name="Takenaka Y."/>
            <person name="Taki K."/>
            <person name="Tammoja K."/>
            <person name="Tan S.L."/>
            <person name="Tang S."/>
            <person name="Taylor M.S."/>
            <person name="Tegner J."/>
            <person name="Teichmann S.A."/>
            <person name="Ueda H.R."/>
            <person name="van Nimwegen E."/>
            <person name="Verardo R."/>
            <person name="Wei C.L."/>
            <person name="Yagi K."/>
            <person name="Yamanishi H."/>
            <person name="Zabarovsky E."/>
            <person name="Zhu S."/>
            <person name="Zimmer A."/>
            <person name="Hide W."/>
            <person name="Bult C."/>
            <person name="Grimmond S.M."/>
            <person name="Teasdale R.D."/>
            <person name="Liu E.T."/>
            <person name="Brusic V."/>
            <person name="Quackenbush J."/>
            <person name="Wahlestedt C."/>
            <person name="Mattick J.S."/>
            <person name="Hume D.A."/>
            <person name="Kai C."/>
            <person name="Sasaki D."/>
            <person name="Tomaru Y."/>
            <person name="Fukuda S."/>
            <person name="Kanamori-Katayama M."/>
            <person name="Suzuki M."/>
            <person name="Aoki J."/>
            <person name="Arakawa T."/>
            <person name="Iida J."/>
            <person name="Imamura K."/>
            <person name="Itoh M."/>
            <person name="Kato T."/>
            <person name="Kawaji H."/>
            <person name="Kawagashira N."/>
            <person name="Kawashima T."/>
            <person name="Kojima M."/>
            <person name="Kondo S."/>
            <person name="Konno H."/>
            <person name="Nakano K."/>
            <person name="Ninomiya N."/>
            <person name="Nishio T."/>
            <person name="Okada M."/>
            <person name="Plessy C."/>
            <person name="Shibata K."/>
            <person name="Shiraki T."/>
            <person name="Suzuki S."/>
            <person name="Tagami M."/>
            <person name="Waki K."/>
            <person name="Watahiki A."/>
            <person name="Okamura-Oho Y."/>
            <person name="Suzuki H."/>
            <person name="Kawai J."/>
            <person name="Hayashizaki Y."/>
        </authorList>
    </citation>
    <scope>NUCLEOTIDE SEQUENCE [LARGE SCALE MRNA] OF 750-1964</scope>
    <source>
        <strain>C57BL/6J</strain>
        <tissue>Testis</tissue>
    </source>
</reference>
<reference key="5">
    <citation type="journal article" date="2007" name="Proc. Natl. Acad. Sci. U.S.A.">
        <title>Large-scale phosphorylation analysis of mouse liver.</title>
        <authorList>
            <person name="Villen J."/>
            <person name="Beausoleil S.A."/>
            <person name="Gerber S.A."/>
            <person name="Gygi S.P."/>
        </authorList>
    </citation>
    <scope>IDENTIFICATION BY MASS SPECTROMETRY [LARGE SCALE ANALYSIS]</scope>
    <source>
        <tissue>Liver</tissue>
    </source>
</reference>
<reference key="6">
    <citation type="journal article" date="2010" name="Cell">
        <title>A tissue-specific atlas of mouse protein phosphorylation and expression.</title>
        <authorList>
            <person name="Huttlin E.L."/>
            <person name="Jedrychowski M.P."/>
            <person name="Elias J.E."/>
            <person name="Goswami T."/>
            <person name="Rad R."/>
            <person name="Beausoleil S.A."/>
            <person name="Villen J."/>
            <person name="Haas W."/>
            <person name="Sowa M.E."/>
            <person name="Gygi S.P."/>
        </authorList>
    </citation>
    <scope>PHOSPHORYLATION [LARGE SCALE ANALYSIS] AT SER-1763</scope>
    <scope>IDENTIFICATION BY MASS SPECTROMETRY [LARGE SCALE ANALYSIS]</scope>
    <source>
        <tissue>Brown adipose tissue</tissue>
        <tissue>Heart</tissue>
        <tissue>Kidney</tissue>
        <tissue>Lung</tissue>
        <tissue>Spleen</tissue>
        <tissue>Testis</tissue>
    </source>
</reference>
<reference key="7">
    <citation type="journal article" date="2010" name="PLoS ONE">
        <title>Cardiac deletion of Smyd2 is dispensable for mouse heart development.</title>
        <authorList>
            <person name="Diehl F."/>
            <person name="Brown M.A."/>
            <person name="van Amerongen M.J."/>
            <person name="Novoyatleva T."/>
            <person name="Wietelmann A."/>
            <person name="Harriss J."/>
            <person name="Ferrazzi F."/>
            <person name="Bottger T."/>
            <person name="Harvey R.P."/>
            <person name="Tucker P.W."/>
            <person name="Engel F.B."/>
        </authorList>
    </citation>
    <scope>INTERACTION WITH SMYD2</scope>
</reference>
<feature type="chain" id="PRO_0000354096" description="Probable helicase with zinc finger domain">
    <location>
        <begin position="1"/>
        <end position="1964"/>
    </location>
</feature>
<feature type="zinc finger region" description="C3H1-type" evidence="4">
    <location>
        <begin position="178"/>
        <end position="206"/>
    </location>
</feature>
<feature type="region of interest" description="Disordered" evidence="5">
    <location>
        <begin position="1116"/>
        <end position="1135"/>
    </location>
</feature>
<feature type="region of interest" description="Disordered" evidence="5">
    <location>
        <begin position="1248"/>
        <end position="1350"/>
    </location>
</feature>
<feature type="region of interest" description="Disordered" evidence="5">
    <location>
        <begin position="1360"/>
        <end position="1379"/>
    </location>
</feature>
<feature type="region of interest" description="Disordered" evidence="5">
    <location>
        <begin position="1388"/>
        <end position="1449"/>
    </location>
</feature>
<feature type="region of interest" description="Disordered" evidence="5">
    <location>
        <begin position="1463"/>
        <end position="1491"/>
    </location>
</feature>
<feature type="region of interest" description="Disordered" evidence="5">
    <location>
        <begin position="1631"/>
        <end position="1655"/>
    </location>
</feature>
<feature type="region of interest" description="Disordered" evidence="5">
    <location>
        <begin position="1743"/>
        <end position="1964"/>
    </location>
</feature>
<feature type="short sequence motif" description="DEAA box">
    <location>
        <begin position="794"/>
        <end position="797"/>
    </location>
</feature>
<feature type="compositionally biased region" description="Polar residues" evidence="5">
    <location>
        <begin position="1116"/>
        <end position="1127"/>
    </location>
</feature>
<feature type="compositionally biased region" description="Basic and acidic residues" evidence="5">
    <location>
        <begin position="1268"/>
        <end position="1281"/>
    </location>
</feature>
<feature type="compositionally biased region" description="Basic and acidic residues" evidence="5">
    <location>
        <begin position="1292"/>
        <end position="1308"/>
    </location>
</feature>
<feature type="compositionally biased region" description="Pro residues" evidence="5">
    <location>
        <begin position="1365"/>
        <end position="1374"/>
    </location>
</feature>
<feature type="compositionally biased region" description="Low complexity" evidence="5">
    <location>
        <begin position="1388"/>
        <end position="1431"/>
    </location>
</feature>
<feature type="compositionally biased region" description="Pro residues" evidence="5">
    <location>
        <begin position="1635"/>
        <end position="1644"/>
    </location>
</feature>
<feature type="compositionally biased region" description="Polar residues" evidence="5">
    <location>
        <begin position="1755"/>
        <end position="1765"/>
    </location>
</feature>
<feature type="compositionally biased region" description="Polar residues" evidence="5">
    <location>
        <begin position="1799"/>
        <end position="1813"/>
    </location>
</feature>
<feature type="compositionally biased region" description="Polar residues" evidence="5">
    <location>
        <begin position="1826"/>
        <end position="1849"/>
    </location>
</feature>
<feature type="compositionally biased region" description="Basic and acidic residues" evidence="5">
    <location>
        <begin position="1860"/>
        <end position="1870"/>
    </location>
</feature>
<feature type="compositionally biased region" description="Polar residues" evidence="5">
    <location>
        <begin position="1872"/>
        <end position="1881"/>
    </location>
</feature>
<feature type="compositionally biased region" description="Polar residues" evidence="5">
    <location>
        <begin position="1897"/>
        <end position="1910"/>
    </location>
</feature>
<feature type="compositionally biased region" description="Low complexity" evidence="5">
    <location>
        <begin position="1941"/>
        <end position="1956"/>
    </location>
</feature>
<feature type="binding site" evidence="3">
    <location>
        <begin position="668"/>
        <end position="675"/>
    </location>
    <ligand>
        <name>ATP</name>
        <dbReference type="ChEBI" id="CHEBI:30616"/>
    </ligand>
</feature>
<feature type="modified residue" description="Phosphoserine" evidence="2">
    <location>
        <position position="248"/>
    </location>
</feature>
<feature type="modified residue" description="Phosphothreonine" evidence="2">
    <location>
        <position position="1163"/>
    </location>
</feature>
<feature type="modified residue" description="Omega-N-methylarginine" evidence="2">
    <location>
        <position position="1245"/>
    </location>
</feature>
<feature type="modified residue" description="Phosphoserine" evidence="2">
    <location>
        <position position="1636"/>
    </location>
</feature>
<feature type="modified residue" description="Phosphoserine" evidence="2">
    <location>
        <position position="1760"/>
    </location>
</feature>
<feature type="modified residue" description="Phosphoserine" evidence="10">
    <location>
        <position position="1763"/>
    </location>
</feature>
<feature type="modified residue" description="Phosphoserine" evidence="2">
    <location>
        <position position="1788"/>
    </location>
</feature>
<feature type="splice variant" id="VSP_035795" description="In isoform 3." evidence="8">
    <original>T</original>
    <variation>TS</variation>
    <location>
        <position position="691"/>
    </location>
</feature>
<feature type="splice variant" id="VSP_035796" description="In isoform 2." evidence="7">
    <original>FQDLLRELSHRDQGDTGEL</original>
    <variation>YSSRPGPALITTCVWSASL</variation>
    <location>
        <begin position="1598"/>
        <end position="1616"/>
    </location>
</feature>
<feature type="splice variant" id="VSP_035797" description="In isoform 2." evidence="7">
    <location>
        <begin position="1617"/>
        <end position="1964"/>
    </location>
</feature>
<feature type="sequence conflict" description="In Ref. 4; BAC28150." evidence="9" ref="4">
    <original>I</original>
    <variation>T</variation>
    <location>
        <position position="963"/>
    </location>
</feature>
<feature type="sequence conflict" description="In Ref. 4; BAC28150." evidence="9" ref="4">
    <original>L</original>
    <variation>P</variation>
    <location>
        <position position="1193"/>
    </location>
</feature>
<feature type="sequence conflict" description="In Ref. 4; BAC28150." evidence="9" ref="4">
    <original>I</original>
    <variation>N</variation>
    <location>
        <position position="1496"/>
    </location>
</feature>
<feature type="sequence conflict" description="In Ref. 3; AAH21818." evidence="9" ref="3">
    <original>A</original>
    <variation>V</variation>
    <location>
        <position position="1746"/>
    </location>
</feature>
<name>HELZ_MOUSE</name>
<keyword id="KW-0025">Alternative splicing</keyword>
<keyword id="KW-0067">ATP-binding</keyword>
<keyword id="KW-0347">Helicase</keyword>
<keyword id="KW-0378">Hydrolase</keyword>
<keyword id="KW-0479">Metal-binding</keyword>
<keyword id="KW-0488">Methylation</keyword>
<keyword id="KW-0547">Nucleotide-binding</keyword>
<keyword id="KW-0539">Nucleus</keyword>
<keyword id="KW-0597">Phosphoprotein</keyword>
<keyword id="KW-1185">Reference proteome</keyword>
<keyword id="KW-0862">Zinc</keyword>
<keyword id="KW-0863">Zinc-finger</keyword>
<comment type="function">
    <text evidence="1">May act as a helicase that plays a role in RNA metabolism in multiple tissues and organs within the developing embryo.</text>
</comment>
<comment type="subunit">
    <text evidence="1 6">Interacts with POLR2A. Interacts with SMYD3; the interaction may bridge SMYD3 and RNA polymerase II (By similarity). Interacts with SMYD2.</text>
</comment>
<comment type="subcellular location">
    <subcellularLocation>
        <location evidence="9">Nucleus</location>
    </subcellularLocation>
</comment>
<comment type="alternative products">
    <event type="alternative splicing"/>
    <isoform>
        <id>Q6DFV5-1</id>
        <name>1</name>
        <sequence type="displayed"/>
    </isoform>
    <isoform>
        <id>Q6DFV5-2</id>
        <name>2</name>
        <sequence type="described" ref="VSP_035796 VSP_035797"/>
    </isoform>
    <isoform>
        <id>Q6DFV5-3</id>
        <name>3</name>
        <sequence type="described" ref="VSP_035795"/>
    </isoform>
</comment>
<comment type="miscellaneous">
    <molecule>Isoform 2</molecule>
    <text evidence="9">May be due to intron retention.</text>
</comment>
<comment type="similarity">
    <text evidence="9">Belongs to the DNA2/NAM7 helicase family.</text>
</comment>
<comment type="sequence caution" evidence="9">
    <conflict type="erroneous initiation">
        <sequence resource="EMBL-CDS" id="BAC41393"/>
    </conflict>
    <text>Extended N-terminus.</text>
</comment>
<dbReference type="EC" id="3.6.4.-"/>
<dbReference type="EMBL" id="AB093209">
    <property type="protein sequence ID" value="BAC41393.1"/>
    <property type="status" value="ALT_INIT"/>
    <property type="molecule type" value="mRNA"/>
</dbReference>
<dbReference type="EMBL" id="AL645947">
    <property type="status" value="NOT_ANNOTATED_CDS"/>
    <property type="molecule type" value="Genomic_DNA"/>
</dbReference>
<dbReference type="EMBL" id="BC021818">
    <property type="protein sequence ID" value="AAH21818.1"/>
    <property type="molecule type" value="mRNA"/>
</dbReference>
<dbReference type="EMBL" id="BC076626">
    <property type="protein sequence ID" value="AAH76626.1"/>
    <property type="molecule type" value="mRNA"/>
</dbReference>
<dbReference type="EMBL" id="AK033094">
    <property type="protein sequence ID" value="BAC28150.1"/>
    <property type="molecule type" value="mRNA"/>
</dbReference>
<dbReference type="CCDS" id="CCDS25569.1">
    <molecule id="Q6DFV5-3"/>
</dbReference>
<dbReference type="CCDS" id="CCDS88275.1">
    <molecule id="Q6DFV5-1"/>
</dbReference>
<dbReference type="RefSeq" id="NP_001355684.1">
    <molecule id="Q6DFV5-1"/>
    <property type="nucleotide sequence ID" value="NM_001368755.1"/>
</dbReference>
<dbReference type="RefSeq" id="NP_938040.1">
    <molecule id="Q6DFV5-3"/>
    <property type="nucleotide sequence ID" value="NM_198298.2"/>
</dbReference>
<dbReference type="RefSeq" id="XP_006534567.1">
    <molecule id="Q6DFV5-3"/>
    <property type="nucleotide sequence ID" value="XM_006534504.1"/>
</dbReference>
<dbReference type="RefSeq" id="XP_006534568.1">
    <molecule id="Q6DFV5-3"/>
    <property type="nucleotide sequence ID" value="XM_006534505.5"/>
</dbReference>
<dbReference type="RefSeq" id="XP_006534569.1">
    <molecule id="Q6DFV5-3"/>
    <property type="nucleotide sequence ID" value="XM_006534506.5"/>
</dbReference>
<dbReference type="RefSeq" id="XP_006534570.1">
    <property type="nucleotide sequence ID" value="XM_006534507.2"/>
</dbReference>
<dbReference type="RefSeq" id="XP_030102290.1">
    <molecule id="Q6DFV5-1"/>
    <property type="nucleotide sequence ID" value="XM_030246430.1"/>
</dbReference>
<dbReference type="SMR" id="Q6DFV5"/>
<dbReference type="BioGRID" id="219414">
    <property type="interactions" value="7"/>
</dbReference>
<dbReference type="FunCoup" id="Q6DFV5">
    <property type="interactions" value="2420"/>
</dbReference>
<dbReference type="IntAct" id="Q6DFV5">
    <property type="interactions" value="1"/>
</dbReference>
<dbReference type="STRING" id="10090.ENSMUSP00000074533"/>
<dbReference type="GlyGen" id="Q6DFV5">
    <property type="glycosylation" value="2 sites, 1 O-linked glycan (2 sites)"/>
</dbReference>
<dbReference type="iPTMnet" id="Q6DFV5"/>
<dbReference type="PhosphoSitePlus" id="Q6DFV5"/>
<dbReference type="jPOST" id="Q6DFV5"/>
<dbReference type="PaxDb" id="10090-ENSMUSP00000074533"/>
<dbReference type="PeptideAtlas" id="Q6DFV5"/>
<dbReference type="ProteomicsDB" id="269583">
    <molecule id="Q6DFV5-1"/>
</dbReference>
<dbReference type="ProteomicsDB" id="269584">
    <molecule id="Q6DFV5-2"/>
</dbReference>
<dbReference type="ProteomicsDB" id="269585">
    <molecule id="Q6DFV5-3"/>
</dbReference>
<dbReference type="Pumba" id="Q6DFV5"/>
<dbReference type="Antibodypedia" id="31693">
    <property type="antibodies" value="89 antibodies from 13 providers"/>
</dbReference>
<dbReference type="DNASU" id="78455"/>
<dbReference type="Ensembl" id="ENSMUST00000075012.8">
    <molecule id="Q6DFV5-3"/>
    <property type="protein sequence ID" value="ENSMUSP00000074533.2"/>
    <property type="gene ID" value="ENSMUSG00000020721.17"/>
</dbReference>
<dbReference type="Ensembl" id="ENSMUST00000100305.8">
    <molecule id="Q6DFV5-2"/>
    <property type="protein sequence ID" value="ENSMUSP00000097878.2"/>
    <property type="gene ID" value="ENSMUSG00000020721.17"/>
</dbReference>
<dbReference type="Ensembl" id="ENSMUST00000106746.8">
    <molecule id="Q6DFV5-1"/>
    <property type="protein sequence ID" value="ENSMUSP00000102357.2"/>
    <property type="gene ID" value="ENSMUSG00000020721.17"/>
</dbReference>
<dbReference type="GeneID" id="78455"/>
<dbReference type="KEGG" id="mmu:78455"/>
<dbReference type="UCSC" id="uc007mav.1">
    <molecule id="Q6DFV5-3"/>
    <property type="organism name" value="mouse"/>
</dbReference>
<dbReference type="AGR" id="MGI:1925705"/>
<dbReference type="CTD" id="9931"/>
<dbReference type="MGI" id="MGI:1925705">
    <property type="gene designation" value="Helz"/>
</dbReference>
<dbReference type="VEuPathDB" id="HostDB:ENSMUSG00000020721"/>
<dbReference type="eggNOG" id="KOG1804">
    <property type="taxonomic scope" value="Eukaryota"/>
</dbReference>
<dbReference type="GeneTree" id="ENSGT00940000156686"/>
<dbReference type="InParanoid" id="Q6DFV5"/>
<dbReference type="OMA" id="GQEPFHS"/>
<dbReference type="OrthoDB" id="57089at9989"/>
<dbReference type="PhylomeDB" id="Q6DFV5"/>
<dbReference type="TreeFam" id="TF323999"/>
<dbReference type="BioGRID-ORCS" id="78455">
    <property type="hits" value="2 hits in 77 CRISPR screens"/>
</dbReference>
<dbReference type="ChiTaRS" id="Helz">
    <property type="organism name" value="mouse"/>
</dbReference>
<dbReference type="PRO" id="PR:Q6DFV5"/>
<dbReference type="Proteomes" id="UP000000589">
    <property type="component" value="Chromosome 11"/>
</dbReference>
<dbReference type="RNAct" id="Q6DFV5">
    <property type="molecule type" value="protein"/>
</dbReference>
<dbReference type="Bgee" id="ENSMUSG00000020721">
    <property type="expression patterns" value="Expressed in embryonic post-anal tail and 254 other cell types or tissues"/>
</dbReference>
<dbReference type="ExpressionAtlas" id="Q6DFV5">
    <property type="expression patterns" value="baseline and differential"/>
</dbReference>
<dbReference type="GO" id="GO:0005634">
    <property type="term" value="C:nucleus"/>
    <property type="evidence" value="ECO:0007669"/>
    <property type="project" value="UniProtKB-SubCell"/>
</dbReference>
<dbReference type="GO" id="GO:0005524">
    <property type="term" value="F:ATP binding"/>
    <property type="evidence" value="ECO:0007669"/>
    <property type="project" value="UniProtKB-KW"/>
</dbReference>
<dbReference type="GO" id="GO:0004386">
    <property type="term" value="F:helicase activity"/>
    <property type="evidence" value="ECO:0007669"/>
    <property type="project" value="UniProtKB-KW"/>
</dbReference>
<dbReference type="GO" id="GO:0016787">
    <property type="term" value="F:hydrolase activity"/>
    <property type="evidence" value="ECO:0007669"/>
    <property type="project" value="UniProtKB-KW"/>
</dbReference>
<dbReference type="GO" id="GO:0008270">
    <property type="term" value="F:zinc ion binding"/>
    <property type="evidence" value="ECO:0007669"/>
    <property type="project" value="UniProtKB-KW"/>
</dbReference>
<dbReference type="CDD" id="cd18077">
    <property type="entry name" value="DEXXQc_HELZ"/>
    <property type="match status" value="1"/>
</dbReference>
<dbReference type="CDD" id="cd18808">
    <property type="entry name" value="SF1_C_Upf1"/>
    <property type="match status" value="1"/>
</dbReference>
<dbReference type="FunFam" id="3.40.50.300:FF:000419">
    <property type="entry name" value="Probable helicase with zinc finger domain"/>
    <property type="match status" value="1"/>
</dbReference>
<dbReference type="FunFam" id="3.40.50.300:FF:000453">
    <property type="entry name" value="Probable helicase with zinc finger domain"/>
    <property type="match status" value="1"/>
</dbReference>
<dbReference type="FunFam" id="4.10.1000.10:FF:000009">
    <property type="entry name" value="probable helicase with zinc finger domain"/>
    <property type="match status" value="1"/>
</dbReference>
<dbReference type="Gene3D" id="3.40.50.300">
    <property type="entry name" value="P-loop containing nucleotide triphosphate hydrolases"/>
    <property type="match status" value="2"/>
</dbReference>
<dbReference type="Gene3D" id="4.10.1000.10">
    <property type="entry name" value="Zinc finger, CCCH-type"/>
    <property type="match status" value="1"/>
</dbReference>
<dbReference type="InterPro" id="IPR045055">
    <property type="entry name" value="DNA2/NAM7-like"/>
</dbReference>
<dbReference type="InterPro" id="IPR041679">
    <property type="entry name" value="DNA2/NAM7-like_C"/>
</dbReference>
<dbReference type="InterPro" id="IPR041677">
    <property type="entry name" value="DNA2/NAM7_AAA_11"/>
</dbReference>
<dbReference type="InterPro" id="IPR049569">
    <property type="entry name" value="HELZ_DEAD-box_1"/>
</dbReference>
<dbReference type="InterPro" id="IPR027417">
    <property type="entry name" value="P-loop_NTPase"/>
</dbReference>
<dbReference type="InterPro" id="IPR047187">
    <property type="entry name" value="SF1_C_Upf1"/>
</dbReference>
<dbReference type="InterPro" id="IPR014016">
    <property type="entry name" value="UvrD-like_ATP-bd"/>
</dbReference>
<dbReference type="InterPro" id="IPR000571">
    <property type="entry name" value="Znf_CCCH"/>
</dbReference>
<dbReference type="InterPro" id="IPR036855">
    <property type="entry name" value="Znf_CCCH_sf"/>
</dbReference>
<dbReference type="PANTHER" id="PTHR10887">
    <property type="entry name" value="DNA2/NAM7 HELICASE FAMILY"/>
    <property type="match status" value="1"/>
</dbReference>
<dbReference type="PANTHER" id="PTHR10887:SF365">
    <property type="entry name" value="HELICASE WITH ZINC FINGER DOMAIN-RELATED"/>
    <property type="match status" value="1"/>
</dbReference>
<dbReference type="Pfam" id="PF13086">
    <property type="entry name" value="AAA_11"/>
    <property type="match status" value="1"/>
</dbReference>
<dbReference type="Pfam" id="PF13087">
    <property type="entry name" value="AAA_12"/>
    <property type="match status" value="1"/>
</dbReference>
<dbReference type="Pfam" id="PF00580">
    <property type="entry name" value="UvrD-helicase"/>
    <property type="match status" value="1"/>
</dbReference>
<dbReference type="Pfam" id="PF00642">
    <property type="entry name" value="zf-CCCH"/>
    <property type="match status" value="1"/>
</dbReference>
<dbReference type="SMART" id="SM00356">
    <property type="entry name" value="ZnF_C3H1"/>
    <property type="match status" value="1"/>
</dbReference>
<dbReference type="SUPFAM" id="SSF90229">
    <property type="entry name" value="CCCH zinc finger"/>
    <property type="match status" value="1"/>
</dbReference>
<dbReference type="SUPFAM" id="SSF52540">
    <property type="entry name" value="P-loop containing nucleoside triphosphate hydrolases"/>
    <property type="match status" value="1"/>
</dbReference>
<dbReference type="PROSITE" id="PS50103">
    <property type="entry name" value="ZF_C3H1"/>
    <property type="match status" value="1"/>
</dbReference>
<evidence type="ECO:0000250" key="1"/>
<evidence type="ECO:0000250" key="2">
    <source>
        <dbReference type="UniProtKB" id="P42694"/>
    </source>
</evidence>
<evidence type="ECO:0000255" key="3"/>
<evidence type="ECO:0000255" key="4">
    <source>
        <dbReference type="PROSITE-ProRule" id="PRU00723"/>
    </source>
</evidence>
<evidence type="ECO:0000256" key="5">
    <source>
        <dbReference type="SAM" id="MobiDB-lite"/>
    </source>
</evidence>
<evidence type="ECO:0000269" key="6">
    <source>
    </source>
</evidence>
<evidence type="ECO:0000303" key="7">
    <source>
    </source>
</evidence>
<evidence type="ECO:0000303" key="8">
    <source>
    </source>
</evidence>
<evidence type="ECO:0000305" key="9"/>
<evidence type="ECO:0007744" key="10">
    <source>
    </source>
</evidence>
<sequence>MEDRRAERSCEQACASLQRQDYDMALQHCTDALLSLGQYSMADFTGPCPVEVERIKIESLLYRIASFLQLKNYGQADEDCRHVLGEGLAKGERAFRAVLCCMQLKGKLQLVSSILAKSLSGESLNGMVTKDLTRLKTLLTETETATSNVLSGCHVEDLDEGSCNGWHFRPPPRGITSSEEYTLCKRFLEQGICRYGAQCTSAHSQEELAEWQKRYASRLIKLKQQSENKQLSGSYMETLIEKWMSSLSPEKVLSECIEGVQVEHSPDLSVTVNTKKSHQTWTFALTCKPARMLYRVALLYDAHRPHFSIIAISAGDSTTQVSQEVPENCQEWIGGKMAQNGLDHYVYKVGIAFNTEIFGTFRQTIVFDFGLEPVLMQRVMIDAASTEDLEYLMHAKRQLVTTAKRWDSSSKTIVDFEPNETTDLEKSLLIRYQIPLSADQLFTQSVLDKSLTKTNYQARLHDLLYIEEIAQYKEVSRFNLKVQLQILASFMLTGVSGGAKYAQNGQLFGRFKLTETLSEDTLAGRLVMTRVNAVYLLPVPKEKLVQSQGTKEKVYEATIEEKTKDYVFLRISRECCEELSLRPDCDIQVELQFQLNRLPLCEMHYALDRIKDNAVLFPDISMTPTIPWSPNRQWDEQLDPRLNAKQKEAVLAITTPLSIQLPPVLIIGPYGTGKTFTLAQAAKHILQQQETRILICTHSNSAADLYIKDYLHPYVEAGNPQARPLRVYFRNRWVKTVHPVVHQYCLISSTQSTFQMPQKEDILKHRVVVVTLSTSQYLCQLDLEPGFFTHVLLDEAAQAMECETIMPLALATKNTRIVLAGDHMQLSPFVYSEFARERNLHVSLLDRLYEHYPAEFPCRILLCENYRSHEAIINYTSELFYEGKLMASGKQPAHKDFYPLTFFTARGEDVQEKNSTAFYNNAEVFEVVERVEELRRKWPVAWGKLDDGSIGVVTPYADQVFRIRAELRKKRLSDVNVERVLNVQGKQFRVLFLSTVRTRHTCKHKQTPIKKKEQLLEDSTEDLDYGFLSNYKLLNTAITRAQSLVAVVGDPVALCSIGRCRKFWERFIALCHENHSLHGITFEQIKAQLEALELKKTYVLNPLAPEFIPRALRLQHSGNSSRQQQSPPKVKSLYHPQSDHFQSDGIVQPNPSVLIGNPIRAYTPPPPLGPHPNLGKSPSPVQRIDPHTGTSILYVPAVYGGNVVMSVPLPVPWTGYQGRFAVDPRIITHQAAMAYNMNLLHTHGRGSPIPYGLGHHPPVSLGQPQSQHAEKDQQEQNRNGKTDTNNPGPEINKIRTPEKKPTEPKQVDLESNPQNRSPESRPGVVYSNTKFPRKDHLNPRHINNLPLPAPHAQYAIPSRHFHPLPQLPRPPFPASQPHTLLNQQQNNLPEQPNQMAPQPNQVAPQPNQMTPQPNQVAPQPNQVVQQQSQAPPQAPQPAPQLSPAFQAGPTNAFFNNAVAHRPQSPAAEAVGPEQPPPPGLPDGHSPLRAITQPGPILASPLNNFVDESSPGLPIEEALDGVHGSVALETLRQQQARLQQWSEHHAYLSQGGIPYSHHHHPHLPHLPHTPIGLHQPPVRAEWKVAGRADDETETTFSRFQDLLRELSHRDQGDTGELAEMPPPQSRLLQYRQVQPRSPPAVPSPPSSTDHSSQFANFNDSSRDIEVANSPAFPQRLPPQLFGSPFSLPSEHLAPPPLKYLAPEGAWNFANLQQNHLIGPGFPYGLPPLPPRPPQNPFIHIQNHQHAAGQEPFHPLSSRTVSASSLPSLEEYEPRGPGRPLYQRRISSSSAQPCVEEASAPQDSLAQGKESQGHSNPPAFNFPAPESWANTTSSAPYQNIPCNGSSRTSQPRELIAPPKTVKPPEDQLKPESGEVSSSFNYSMLQHLGQFPPLMPNKQIAESANCSSQQSPAGSKPAMSYASALRAPPKPRPPPEQAKKGSDPLSLLQELSLGSSPGSNGFYSYFK</sequence>
<accession>Q6DFV5</accession>
<accession>A1L4L4</accession>
<accession>A2AAU4</accession>
<accession>Q8BZZ6</accession>
<accession>Q8CHI3</accession>
<accession>Q8VDI3</accession>